<evidence type="ECO:0000250" key="1">
    <source>
        <dbReference type="UniProtKB" id="P80667"/>
    </source>
</evidence>
<evidence type="ECO:0000250" key="2">
    <source>
        <dbReference type="UniProtKB" id="Q92968"/>
    </source>
</evidence>
<evidence type="ECO:0000255" key="3"/>
<evidence type="ECO:0000255" key="4">
    <source>
        <dbReference type="PROSITE-ProRule" id="PRU00192"/>
    </source>
</evidence>
<evidence type="ECO:0000256" key="5">
    <source>
        <dbReference type="SAM" id="MobiDB-lite"/>
    </source>
</evidence>
<evidence type="ECO:0000305" key="6"/>
<gene>
    <name type="primary">prx-13</name>
    <name type="ORF">F32A5.6</name>
</gene>
<keyword id="KW-0472">Membrane</keyword>
<keyword id="KW-0576">Peroxisome</keyword>
<keyword id="KW-0653">Protein transport</keyword>
<keyword id="KW-1185">Reference proteome</keyword>
<keyword id="KW-0728">SH3 domain</keyword>
<keyword id="KW-0811">Translocation</keyword>
<keyword id="KW-0812">Transmembrane</keyword>
<keyword id="KW-1133">Transmembrane helix</keyword>
<keyword id="KW-0813">Transport</keyword>
<proteinExistence type="inferred from homology"/>
<comment type="function">
    <text evidence="1 2">Component of the PEX13-PEX14 docking complex, a translocon channel that specifically mediates the import of peroxisomal cargo proteins bound to PEX5/prx-5 receptor (By similarity). The PEX13-PEX14 docking complex forms a large import pore which can be opened to a diameter of about 9 nm (By similarity). Mechanistically, PEX5/prx-5 receptor along with cargo proteins associates with the PEX14/prx-14 subunit of the PEX13-PEX14 docking complex in the cytosol, leading to the insertion of the receptor into the organelle membrane with the concomitant translocation of the cargo into the peroxisome matrix (By similarity).</text>
</comment>
<comment type="subunit">
    <text evidence="2">Interacts with PEX14/prx-14; forming the PEX13-PEX14 docking complex.</text>
</comment>
<comment type="subcellular location">
    <subcellularLocation>
        <location evidence="2">Peroxisome membrane</location>
        <topology evidence="3">Single-pass membrane protein</topology>
    </subcellularLocation>
</comment>
<comment type="similarity">
    <text evidence="6">Belongs to the peroxin-13 family.</text>
</comment>
<accession>Q19951</accession>
<sequence length="330" mass="35766">MSAPPTNQPPPLPPRSFDNQMSNPMINTGFGYGGGYGMNTFPGSGMYGGGGMYGGGMGYGGFGGGFNHMGYGQGPDSNFARLAEEQSRGAFQSIESVVNAVSSVANMLNSTHNAVYSSFRAVIGVVEQFGRLKTQLSSVVVSLAVFRWVYRFWRWLLVMLKLKPASYASAAEMAWGTSQPYATDVLGATRTPASVNWPAALFWVVAIGGPWLIYRCVSQMVQAAEEKRKWATGAAPHYTAQALFDFQASNEQELSFMNGETLRVAPKEEQPRVRGWLLASVADGSRIGLVPINYVRIVGKQSQSPPLTQQSNLDTFVNAFPARDLNSNIQ</sequence>
<protein>
    <recommendedName>
        <fullName>Peroxisomal membrane protein PEX13</fullName>
    </recommendedName>
    <alternativeName>
        <fullName>Peroxin-13</fullName>
    </alternativeName>
</protein>
<organism>
    <name type="scientific">Caenorhabditis elegans</name>
    <dbReference type="NCBI Taxonomy" id="6239"/>
    <lineage>
        <taxon>Eukaryota</taxon>
        <taxon>Metazoa</taxon>
        <taxon>Ecdysozoa</taxon>
        <taxon>Nematoda</taxon>
        <taxon>Chromadorea</taxon>
        <taxon>Rhabditida</taxon>
        <taxon>Rhabditina</taxon>
        <taxon>Rhabditomorpha</taxon>
        <taxon>Rhabditoidea</taxon>
        <taxon>Rhabditidae</taxon>
        <taxon>Peloderinae</taxon>
        <taxon>Caenorhabditis</taxon>
    </lineage>
</organism>
<dbReference type="EMBL" id="FO080735">
    <property type="protein sequence ID" value="CCD66278.1"/>
    <property type="molecule type" value="Genomic_DNA"/>
</dbReference>
<dbReference type="PIR" id="T16233">
    <property type="entry name" value="T16233"/>
</dbReference>
<dbReference type="RefSeq" id="NP_495513.1">
    <property type="nucleotide sequence ID" value="NM_063112.4"/>
</dbReference>
<dbReference type="SMR" id="Q19951"/>
<dbReference type="BioGRID" id="39528">
    <property type="interactions" value="31"/>
</dbReference>
<dbReference type="FunCoup" id="Q19951">
    <property type="interactions" value="2094"/>
</dbReference>
<dbReference type="IntAct" id="Q19951">
    <property type="interactions" value="31"/>
</dbReference>
<dbReference type="STRING" id="6239.F32A5.6.1"/>
<dbReference type="PaxDb" id="6239-F32A5.6"/>
<dbReference type="PeptideAtlas" id="Q19951"/>
<dbReference type="EnsemblMetazoa" id="F32A5.6.1">
    <property type="protein sequence ID" value="F32A5.6.1"/>
    <property type="gene ID" value="WBGene00004198"/>
</dbReference>
<dbReference type="GeneID" id="174192"/>
<dbReference type="KEGG" id="cel:CELE_F32A5.6"/>
<dbReference type="UCSC" id="F32A5.6">
    <property type="organism name" value="c. elegans"/>
</dbReference>
<dbReference type="AGR" id="WB:WBGene00004198"/>
<dbReference type="CTD" id="174192"/>
<dbReference type="WormBase" id="F32A5.6">
    <property type="protein sequence ID" value="CE28290"/>
    <property type="gene ID" value="WBGene00004198"/>
    <property type="gene designation" value="prx-13"/>
</dbReference>
<dbReference type="eggNOG" id="KOG3875">
    <property type="taxonomic scope" value="Eukaryota"/>
</dbReference>
<dbReference type="GeneTree" id="ENSGT00390000016883"/>
<dbReference type="HOGENOM" id="CLU_045457_0_0_1"/>
<dbReference type="InParanoid" id="Q19951"/>
<dbReference type="OMA" id="PPLDQQM"/>
<dbReference type="OrthoDB" id="10037838at2759"/>
<dbReference type="PhylomeDB" id="Q19951"/>
<dbReference type="Reactome" id="R-CEL-8866654">
    <property type="pathway name" value="E3 ubiquitin ligases ubiquitinate target proteins"/>
</dbReference>
<dbReference type="Reactome" id="R-CEL-9033241">
    <property type="pathway name" value="Peroxisomal protein import"/>
</dbReference>
<dbReference type="Reactome" id="R-CEL-9603798">
    <property type="pathway name" value="Class I peroxisomal membrane protein import"/>
</dbReference>
<dbReference type="SignaLink" id="Q19951"/>
<dbReference type="PRO" id="PR:Q19951"/>
<dbReference type="Proteomes" id="UP000001940">
    <property type="component" value="Chromosome II"/>
</dbReference>
<dbReference type="Bgee" id="WBGene00004198">
    <property type="expression patterns" value="Expressed in larva and 4 other cell types or tissues"/>
</dbReference>
<dbReference type="GO" id="GO:1990429">
    <property type="term" value="C:peroxisomal importomer complex"/>
    <property type="evidence" value="ECO:0000318"/>
    <property type="project" value="GO_Central"/>
</dbReference>
<dbReference type="GO" id="GO:0005778">
    <property type="term" value="C:peroxisomal membrane"/>
    <property type="evidence" value="ECO:0000318"/>
    <property type="project" value="GO_Central"/>
</dbReference>
<dbReference type="GO" id="GO:0002119">
    <property type="term" value="P:nematode larval development"/>
    <property type="evidence" value="ECO:0000315"/>
    <property type="project" value="WormBase"/>
</dbReference>
<dbReference type="GO" id="GO:0016560">
    <property type="term" value="P:protein import into peroxisome matrix, docking"/>
    <property type="evidence" value="ECO:0000318"/>
    <property type="project" value="GO_Central"/>
</dbReference>
<dbReference type="CDD" id="cd11864">
    <property type="entry name" value="SH3_PEX13_eumet"/>
    <property type="match status" value="1"/>
</dbReference>
<dbReference type="FunFam" id="2.30.30.40:FF:000109">
    <property type="entry name" value="Peroxisomal biogenesis factor 13"/>
    <property type="match status" value="1"/>
</dbReference>
<dbReference type="Gene3D" id="2.30.30.40">
    <property type="entry name" value="SH3 Domains"/>
    <property type="match status" value="1"/>
</dbReference>
<dbReference type="InterPro" id="IPR007223">
    <property type="entry name" value="Peroxin-13_N"/>
</dbReference>
<dbReference type="InterPro" id="IPR035463">
    <property type="entry name" value="Pex13"/>
</dbReference>
<dbReference type="InterPro" id="IPR036028">
    <property type="entry name" value="SH3-like_dom_sf"/>
</dbReference>
<dbReference type="InterPro" id="IPR001452">
    <property type="entry name" value="SH3_domain"/>
</dbReference>
<dbReference type="PANTHER" id="PTHR19332">
    <property type="entry name" value="PEROXISOMAL MEMBRANE PROTEIN PEX13"/>
    <property type="match status" value="1"/>
</dbReference>
<dbReference type="PANTHER" id="PTHR19332:SF1">
    <property type="entry name" value="PEROXISOMAL MEMBRANE PROTEIN PEX13"/>
    <property type="match status" value="1"/>
</dbReference>
<dbReference type="Pfam" id="PF04088">
    <property type="entry name" value="Peroxin-13_N"/>
    <property type="match status" value="1"/>
</dbReference>
<dbReference type="Pfam" id="PF14604">
    <property type="entry name" value="SH3_9"/>
    <property type="match status" value="1"/>
</dbReference>
<dbReference type="PRINTS" id="PR00452">
    <property type="entry name" value="SH3DOMAIN"/>
</dbReference>
<dbReference type="SMART" id="SM00326">
    <property type="entry name" value="SH3"/>
    <property type="match status" value="1"/>
</dbReference>
<dbReference type="SUPFAM" id="SSF50044">
    <property type="entry name" value="SH3-domain"/>
    <property type="match status" value="1"/>
</dbReference>
<dbReference type="PROSITE" id="PS50002">
    <property type="entry name" value="SH3"/>
    <property type="match status" value="1"/>
</dbReference>
<name>PEX13_CAEEL</name>
<feature type="chain" id="PRO_0000058322" description="Peroxisomal membrane protein PEX13">
    <location>
        <begin position="1"/>
        <end position="330"/>
    </location>
</feature>
<feature type="transmembrane region" description="Helical" evidence="3">
    <location>
        <begin position="193"/>
        <end position="213"/>
    </location>
</feature>
<feature type="domain" description="SH3" evidence="4">
    <location>
        <begin position="235"/>
        <end position="300"/>
    </location>
</feature>
<feature type="region of interest" description="Disordered" evidence="5">
    <location>
        <begin position="1"/>
        <end position="20"/>
    </location>
</feature>
<feature type="compositionally biased region" description="Pro residues" evidence="5">
    <location>
        <begin position="1"/>
        <end position="14"/>
    </location>
</feature>
<reference key="1">
    <citation type="journal article" date="1998" name="Science">
        <title>Genome sequence of the nematode C. elegans: a platform for investigating biology.</title>
        <authorList>
            <consortium name="The C. elegans sequencing consortium"/>
        </authorList>
    </citation>
    <scope>NUCLEOTIDE SEQUENCE [LARGE SCALE GENOMIC DNA]</scope>
    <source>
        <strain>Bristol N2</strain>
    </source>
</reference>